<protein>
    <recommendedName>
        <fullName>T-kininogen 2</fullName>
    </recommendedName>
    <alternativeName>
        <fullName>Alpha-1-MAP</fullName>
    </alternativeName>
    <alternativeName>
        <fullName>Major acute phase protein</fullName>
    </alternativeName>
    <alternativeName>
        <fullName>T-kininogen II</fullName>
    </alternativeName>
    <alternativeName>
        <fullName>Thiostatin</fullName>
    </alternativeName>
    <component>
        <recommendedName>
            <fullName>T-kininogen 2 heavy chain</fullName>
        </recommendedName>
        <alternativeName>
            <fullName>T-kininogen II heavy chain</fullName>
        </alternativeName>
    </component>
    <component>
        <recommendedName>
            <fullName>T-kinin</fullName>
        </recommendedName>
    </component>
    <component>
        <recommendedName>
            <fullName>T-kininogen 2 light chain</fullName>
        </recommendedName>
        <alternativeName>
            <fullName>T-kininogen II light chain</fullName>
        </alternativeName>
    </component>
</protein>
<keyword id="KW-0011">Acute phase</keyword>
<keyword id="KW-0903">Direct protein sequencing</keyword>
<keyword id="KW-1015">Disulfide bond</keyword>
<keyword id="KW-0325">Glycoprotein</keyword>
<keyword id="KW-0646">Protease inhibitor</keyword>
<keyword id="KW-0873">Pyrrolidone carboxylic acid</keyword>
<keyword id="KW-1185">Reference proteome</keyword>
<keyword id="KW-0677">Repeat</keyword>
<keyword id="KW-0964">Secreted</keyword>
<keyword id="KW-0732">Signal</keyword>
<keyword id="KW-0789">Thiol protease inhibitor</keyword>
<keyword id="KW-0838">Vasoactive</keyword>
<keyword id="KW-0840">Vasodilator</keyword>
<sequence>MKLITILLLCSRLLPSLAQEEGAQEMDCNDETVFQAVDTALKKYNAELESGNQFLLYRVTEGTKKDGAETLYSFKYQIKEGNCSVQSGLTWQDCDFKDAEEAATGECTTTLGKKENKFSVATQICNITPGKGPKKTEEDLCVGCFQPIPMDSSDLKPVLKHAVEHFNNNTKHTHLFALTEVKSAHSQVVAGMNYKIIYSIVQTNCSKEDFPFLREDCVPLPYGDHGECRGHTYVDIHNTIAGFSQSCDLYPGDDLFSLLPKKCFGCPKNIPVDSPELKEALGHSIAQLNAQHNHLFYFKIDTVKKATSQVVAGTKYVIEFIARETNCSKQTNTELTADCETKHLGQSLNCNANVYMRPWENKVVPTVRCQALDMMISRPPGFSPFRLVQVQETKEGTTRLLNSCEYKGRLSKAGAGPAPDHQAEASTVTP</sequence>
<proteinExistence type="evidence at protein level"/>
<accession>P08932</accession>
<accession>Q5M894</accession>
<comment type="function">
    <text>Kininogens are plasma glycoproteins with a number of functions: (1) as precursor of the active peptide bradykinin they effect smooth muscle contraction, induction of hypotension and increase of vascular permeability. (2) They play a role in blood coagulation by helping to position optimally prekallikrein and factor XI next to factor XII. (3) They are inhibitor of thiol proteases.</text>
</comment>
<comment type="subcellular location">
    <subcellularLocation>
        <location>Secreted</location>
        <location>Extracellular space</location>
    </subcellularLocation>
</comment>
<comment type="tissue specificity">
    <text>Plasma.</text>
</comment>
<comment type="induction">
    <text>In response to an inflammatory stimulant. T-kininogen II synthesis is induced and the plasma concentration of T-kininogen I is raised.</text>
</comment>
<comment type="PTM">
    <text>As T-kinin is preceded by a Met instead of an Arg or Lys, it is not released from its precursor by either tissue or plasma kallikrein.</text>
</comment>
<comment type="miscellaneous">
    <text>Rats express four types of kininogens: the classical HMW and LMW kininogens produced by alternative splicing of the same gene, and two additional LMW-like kininogens: T-I and T-II.</text>
</comment>
<comment type="sequence caution" evidence="5">
    <conflict type="frameshift">
        <sequence resource="EMBL-CDS" id="AAA41570"/>
    </conflict>
</comment>
<reference key="1">
    <citation type="journal article" date="2004" name="Genome Res.">
        <title>The status, quality, and expansion of the NIH full-length cDNA project: the Mammalian Gene Collection (MGC).</title>
        <authorList>
            <consortium name="The MGC Project Team"/>
        </authorList>
    </citation>
    <scope>NUCLEOTIDE SEQUENCE [LARGE SCALE MRNA]</scope>
    <source>
        <tissue>Liver</tissue>
    </source>
</reference>
<reference key="2">
    <citation type="journal article" date="1985" name="J. Biol. Chem.">
        <title>The relationship between rat major acute phase protein and the kininogens.</title>
        <authorList>
            <person name="Anderson K.P."/>
            <person name="Heath E.C."/>
        </authorList>
    </citation>
    <scope>NUCLEOTIDE SEQUENCE [MRNA] OF 5-430</scope>
    <scope>PARTIAL PROTEIN SEQUENCE</scope>
</reference>
<reference key="3">
    <citation type="journal article" date="1985" name="J. Biol. Chem.">
        <title>Primary structures of the mRNAs encoding the rat precursors for bradykinin and T-kinin. Structural relationship of kininogens with major acute phase protein and alpha 1-cysteine proteinase inhibitor.</title>
        <authorList>
            <person name="Furuto-Kato S."/>
            <person name="Matsumoto A."/>
            <person name="Kitamura N."/>
            <person name="Nakanishi S."/>
        </authorList>
    </citation>
    <scope>NUCLEOTIDE SEQUENCE [MRNA] OF 238-430</scope>
</reference>
<name>KNT2_RAT</name>
<dbReference type="EMBL" id="BC088161">
    <property type="protein sequence ID" value="AAH88161.1"/>
    <property type="molecule type" value="mRNA"/>
</dbReference>
<dbReference type="EMBL" id="M11661">
    <property type="protein sequence ID" value="AAA41570.1"/>
    <property type="status" value="ALT_FRAME"/>
    <property type="molecule type" value="mRNA"/>
</dbReference>
<dbReference type="EMBL" id="M11885">
    <property type="protein sequence ID" value="AAA41491.1"/>
    <property type="molecule type" value="mRNA"/>
</dbReference>
<dbReference type="PIR" id="B28055">
    <property type="entry name" value="B28055"/>
</dbReference>
<dbReference type="RefSeq" id="NP_001009628.1">
    <property type="nucleotide sequence ID" value="NM_001009628.1"/>
</dbReference>
<dbReference type="SMR" id="P08932"/>
<dbReference type="MEROPS" id="I25.019"/>
<dbReference type="GlyConnect" id="604">
    <property type="glycosylation" value="6 N-Linked glycans"/>
</dbReference>
<dbReference type="GlyGen" id="P08932">
    <property type="glycosylation" value="5 sites, 11 N-linked glycans (1 site)"/>
</dbReference>
<dbReference type="jPOST" id="P08932"/>
<dbReference type="PaxDb" id="10116-ENSRNOP00000055278"/>
<dbReference type="GeneID" id="288001"/>
<dbReference type="KEGG" id="rno:288001"/>
<dbReference type="UCSC" id="RGD:1359376">
    <property type="organism name" value="rat"/>
</dbReference>
<dbReference type="AGR" id="RGD:1359376"/>
<dbReference type="CTD" id="3827"/>
<dbReference type="VEuPathDB" id="HostDB:ENSRNOG00000030387"/>
<dbReference type="eggNOG" id="ENOG502RYAC">
    <property type="taxonomic scope" value="Eukaryota"/>
</dbReference>
<dbReference type="InParanoid" id="P08932"/>
<dbReference type="OrthoDB" id="74823at9989"/>
<dbReference type="PhylomeDB" id="P08932"/>
<dbReference type="TreeFam" id="TF351852"/>
<dbReference type="PRO" id="PR:P08932"/>
<dbReference type="Proteomes" id="UP000002494">
    <property type="component" value="Chromosome 11"/>
</dbReference>
<dbReference type="Bgee" id="ENSRNOG00000030387">
    <property type="expression patterns" value="Expressed in liver and 16 other cell types or tissues"/>
</dbReference>
<dbReference type="ExpressionAtlas" id="P08932">
    <property type="expression patterns" value="baseline and differential"/>
</dbReference>
<dbReference type="GO" id="GO:0005576">
    <property type="term" value="C:extracellular region"/>
    <property type="evidence" value="ECO:0000318"/>
    <property type="project" value="GO_Central"/>
</dbReference>
<dbReference type="GO" id="GO:0004869">
    <property type="term" value="F:cysteine-type endopeptidase inhibitor activity"/>
    <property type="evidence" value="ECO:0000318"/>
    <property type="project" value="GO_Central"/>
</dbReference>
<dbReference type="GO" id="GO:0006953">
    <property type="term" value="P:acute-phase response"/>
    <property type="evidence" value="ECO:0007669"/>
    <property type="project" value="UniProtKB-KW"/>
</dbReference>
<dbReference type="GO" id="GO:0030195">
    <property type="term" value="P:negative regulation of blood coagulation"/>
    <property type="evidence" value="ECO:0000318"/>
    <property type="project" value="GO_Central"/>
</dbReference>
<dbReference type="GO" id="GO:0007162">
    <property type="term" value="P:negative regulation of cell adhesion"/>
    <property type="evidence" value="ECO:0000318"/>
    <property type="project" value="GO_Central"/>
</dbReference>
<dbReference type="GO" id="GO:0042311">
    <property type="term" value="P:vasodilation"/>
    <property type="evidence" value="ECO:0007669"/>
    <property type="project" value="UniProtKB-KW"/>
</dbReference>
<dbReference type="CDD" id="cd00042">
    <property type="entry name" value="CY"/>
    <property type="match status" value="3"/>
</dbReference>
<dbReference type="FunFam" id="3.10.450.10:FF:000002">
    <property type="entry name" value="Kininogen 1"/>
    <property type="match status" value="2"/>
</dbReference>
<dbReference type="FunFam" id="3.10.450.10:FF:000008">
    <property type="entry name" value="Kininogen 1"/>
    <property type="match status" value="1"/>
</dbReference>
<dbReference type="Gene3D" id="3.10.450.10">
    <property type="match status" value="3"/>
</dbReference>
<dbReference type="InterPro" id="IPR000010">
    <property type="entry name" value="Cystatin_dom"/>
</dbReference>
<dbReference type="InterPro" id="IPR046350">
    <property type="entry name" value="Cystatin_sf"/>
</dbReference>
<dbReference type="InterPro" id="IPR027358">
    <property type="entry name" value="Kininogen-type_cystatin_dom"/>
</dbReference>
<dbReference type="InterPro" id="IPR050735">
    <property type="entry name" value="Kininogen_Fetuin_HRG"/>
</dbReference>
<dbReference type="InterPro" id="IPR018073">
    <property type="entry name" value="Prot_inh_cystat_CS"/>
</dbReference>
<dbReference type="PANTHER" id="PTHR13814">
    <property type="entry name" value="FETUIN"/>
    <property type="match status" value="1"/>
</dbReference>
<dbReference type="PANTHER" id="PTHR13814:SF12">
    <property type="entry name" value="KININOGEN-1"/>
    <property type="match status" value="1"/>
</dbReference>
<dbReference type="Pfam" id="PF00031">
    <property type="entry name" value="Cystatin"/>
    <property type="match status" value="3"/>
</dbReference>
<dbReference type="SMART" id="SM00043">
    <property type="entry name" value="CY"/>
    <property type="match status" value="3"/>
</dbReference>
<dbReference type="SUPFAM" id="SSF54403">
    <property type="entry name" value="Cystatin/monellin"/>
    <property type="match status" value="3"/>
</dbReference>
<dbReference type="PROSITE" id="PS00287">
    <property type="entry name" value="CYSTATIN"/>
    <property type="match status" value="2"/>
</dbReference>
<dbReference type="PROSITE" id="PS51647">
    <property type="entry name" value="CYSTATIN_KININOGEN"/>
    <property type="match status" value="3"/>
</dbReference>
<evidence type="ECO:0000250" key="1">
    <source>
        <dbReference type="UniProtKB" id="P01048"/>
    </source>
</evidence>
<evidence type="ECO:0000255" key="2"/>
<evidence type="ECO:0000255" key="3">
    <source>
        <dbReference type="PROSITE-ProRule" id="PRU00979"/>
    </source>
</evidence>
<evidence type="ECO:0000256" key="4">
    <source>
        <dbReference type="SAM" id="MobiDB-lite"/>
    </source>
</evidence>
<evidence type="ECO:0000305" key="5"/>
<organism>
    <name type="scientific">Rattus norvegicus</name>
    <name type="common">Rat</name>
    <dbReference type="NCBI Taxonomy" id="10116"/>
    <lineage>
        <taxon>Eukaryota</taxon>
        <taxon>Metazoa</taxon>
        <taxon>Chordata</taxon>
        <taxon>Craniata</taxon>
        <taxon>Vertebrata</taxon>
        <taxon>Euteleostomi</taxon>
        <taxon>Mammalia</taxon>
        <taxon>Eutheria</taxon>
        <taxon>Euarchontoglires</taxon>
        <taxon>Glires</taxon>
        <taxon>Rodentia</taxon>
        <taxon>Myomorpha</taxon>
        <taxon>Muroidea</taxon>
        <taxon>Muridae</taxon>
        <taxon>Murinae</taxon>
        <taxon>Rattus</taxon>
    </lineage>
</organism>
<feature type="signal peptide">
    <location>
        <begin position="1"/>
        <end position="18"/>
    </location>
</feature>
<feature type="chain" id="PRO_0000006703" description="T-kininogen 2">
    <location>
        <begin position="19"/>
        <end position="430"/>
    </location>
</feature>
<feature type="chain" id="PRO_0000006704" description="T-kininogen 2 heavy chain">
    <location>
        <begin position="19"/>
        <end position="375"/>
    </location>
</feature>
<feature type="peptide" id="PRO_0000006705" description="T-kinin">
    <location>
        <begin position="376"/>
        <end position="386"/>
    </location>
</feature>
<feature type="chain" id="PRO_0000006706" description="T-kininogen 2 light chain">
    <location>
        <begin position="387"/>
        <end position="430"/>
    </location>
</feature>
<feature type="domain" description="Cystatin kininogen-type 1" evidence="3">
    <location>
        <begin position="28"/>
        <end position="131"/>
    </location>
</feature>
<feature type="domain" description="Cystatin kininogen-type 2" evidence="3">
    <location>
        <begin position="150"/>
        <end position="253"/>
    </location>
</feature>
<feature type="domain" description="Cystatin kininogen-type 3" evidence="3">
    <location>
        <begin position="272"/>
        <end position="375"/>
    </location>
</feature>
<feature type="region of interest" description="Disordered" evidence="4">
    <location>
        <begin position="410"/>
        <end position="430"/>
    </location>
</feature>
<feature type="modified residue" description="Pyrrolidone carboxylic acid" evidence="1">
    <location>
        <position position="19"/>
    </location>
</feature>
<feature type="glycosylation site" description="N-linked (GlcNAc...) asparagine" evidence="2">
    <location>
        <position position="82"/>
    </location>
</feature>
<feature type="glycosylation site" description="N-linked (GlcNAc...) asparagine" evidence="2">
    <location>
        <position position="168"/>
    </location>
</feature>
<feature type="glycosylation site" description="N-linked (GlcNAc...) asparagine" evidence="2">
    <location>
        <position position="204"/>
    </location>
</feature>
<feature type="glycosylation site" description="N-linked (GlcNAc...) asparagine" evidence="2">
    <location>
        <position position="326"/>
    </location>
</feature>
<feature type="disulfide bond" description="Interchain (between heavy and light chains)" evidence="3">
    <location>
        <begin position="28"/>
        <end position="404"/>
    </location>
</feature>
<feature type="disulfide bond" evidence="3">
    <location>
        <begin position="83"/>
        <end position="94"/>
    </location>
</feature>
<feature type="disulfide bond" evidence="3">
    <location>
        <begin position="107"/>
        <end position="125"/>
    </location>
</feature>
<feature type="disulfide bond" evidence="3">
    <location>
        <begin position="141"/>
        <end position="144"/>
    </location>
</feature>
<feature type="disulfide bond" evidence="3">
    <location>
        <begin position="205"/>
        <end position="217"/>
    </location>
</feature>
<feature type="disulfide bond" evidence="3">
    <location>
        <begin position="228"/>
        <end position="247"/>
    </location>
</feature>
<feature type="disulfide bond" evidence="3">
    <location>
        <begin position="263"/>
        <end position="266"/>
    </location>
</feature>
<feature type="disulfide bond" evidence="3">
    <location>
        <begin position="327"/>
        <end position="339"/>
    </location>
</feature>
<feature type="disulfide bond" evidence="3">
    <location>
        <begin position="350"/>
        <end position="369"/>
    </location>
</feature>
<feature type="sequence conflict" description="In Ref. 2; AA sequence." evidence="5" ref="2">
    <original>MD</original>
    <variation>LN</variation>
    <location>
        <begin position="26"/>
        <end position="27"/>
    </location>
</feature>
<feature type="sequence conflict" description="In Ref. 2; AAA41570." evidence="5" ref="2">
    <original>C</original>
    <variation>R</variation>
    <location>
        <position position="28"/>
    </location>
</feature>
<feature type="sequence conflict" description="In Ref. 2; AA sequence." evidence="5" ref="2">
    <original>L</original>
    <variation>V</variation>
    <location>
        <position position="55"/>
    </location>
</feature>
<feature type="sequence conflict" description="In Ref. 2; AA sequence." evidence="5" ref="2">
    <original>E</original>
    <variation>K</variation>
    <location>
        <position position="61"/>
    </location>
</feature>
<feature type="sequence conflict" description="In Ref. 2; AA sequence." evidence="5" ref="2">
    <original>F</original>
    <variation>S</variation>
    <location>
        <position position="166"/>
    </location>
</feature>
<feature type="sequence conflict" description="In Ref. 2; AA sequence." evidence="5" ref="2">
    <original>T</original>
    <variation>R</variation>
    <location>
        <position position="179"/>
    </location>
</feature>
<feature type="sequence conflict" description="In Ref. 2; AAA41570." evidence="5" ref="2">
    <original>N</original>
    <variation>D</variation>
    <location>
        <position position="193"/>
    </location>
</feature>
<feature type="sequence conflict" description="In Ref. 2; AA sequence." evidence="5" ref="2">
    <original>F</original>
    <variation>S</variation>
    <location>
        <position position="212"/>
    </location>
</feature>
<feature type="sequence conflict" description="In Ref. 2; AA sequence." evidence="5" ref="2">
    <original>R</original>
    <variation>T</variation>
    <location>
        <position position="229"/>
    </location>
</feature>
<feature type="sequence conflict" description="In Ref. 2; AA sequence." evidence="5" ref="2">
    <original>Y</original>
    <variation>H</variation>
    <location>
        <position position="233"/>
    </location>
</feature>
<feature type="sequence conflict" description="In Ref. 2; AAA41570." evidence="5" ref="2">
    <original>A</original>
    <variation>L</variation>
    <location>
        <position position="415"/>
    </location>
</feature>